<name>PYRB_PSECP</name>
<gene>
    <name evidence="1" type="primary">pyrB</name>
    <name type="ordered locus">Achl_2003</name>
</gene>
<organism>
    <name type="scientific">Pseudarthrobacter chlorophenolicus (strain ATCC 700700 / DSM 12829 / CIP 107037 / JCM 12360 / KCTC 9906 / NCIMB 13794 / A6)</name>
    <name type="common">Arthrobacter chlorophenolicus</name>
    <dbReference type="NCBI Taxonomy" id="452863"/>
    <lineage>
        <taxon>Bacteria</taxon>
        <taxon>Bacillati</taxon>
        <taxon>Actinomycetota</taxon>
        <taxon>Actinomycetes</taxon>
        <taxon>Micrococcales</taxon>
        <taxon>Micrococcaceae</taxon>
        <taxon>Pseudarthrobacter</taxon>
    </lineage>
</organism>
<accession>B8H8U9</accession>
<protein>
    <recommendedName>
        <fullName evidence="1">Aspartate carbamoyltransferase catalytic subunit</fullName>
        <ecNumber evidence="1">2.1.3.2</ecNumber>
    </recommendedName>
    <alternativeName>
        <fullName evidence="1">Aspartate transcarbamylase</fullName>
        <shortName evidence="1">ATCase</shortName>
    </alternativeName>
</protein>
<dbReference type="EC" id="2.1.3.2" evidence="1"/>
<dbReference type="EMBL" id="CP001341">
    <property type="protein sequence ID" value="ACL39977.1"/>
    <property type="molecule type" value="Genomic_DNA"/>
</dbReference>
<dbReference type="RefSeq" id="WP_015937195.1">
    <property type="nucleotide sequence ID" value="NC_011886.1"/>
</dbReference>
<dbReference type="SMR" id="B8H8U9"/>
<dbReference type="STRING" id="452863.Achl_2003"/>
<dbReference type="KEGG" id="ach:Achl_2003"/>
<dbReference type="eggNOG" id="COG0540">
    <property type="taxonomic scope" value="Bacteria"/>
</dbReference>
<dbReference type="HOGENOM" id="CLU_043846_2_0_11"/>
<dbReference type="OrthoDB" id="9774690at2"/>
<dbReference type="UniPathway" id="UPA00070">
    <property type="reaction ID" value="UER00116"/>
</dbReference>
<dbReference type="Proteomes" id="UP000002505">
    <property type="component" value="Chromosome"/>
</dbReference>
<dbReference type="GO" id="GO:0005829">
    <property type="term" value="C:cytosol"/>
    <property type="evidence" value="ECO:0007669"/>
    <property type="project" value="TreeGrafter"/>
</dbReference>
<dbReference type="GO" id="GO:0016597">
    <property type="term" value="F:amino acid binding"/>
    <property type="evidence" value="ECO:0007669"/>
    <property type="project" value="InterPro"/>
</dbReference>
<dbReference type="GO" id="GO:0004070">
    <property type="term" value="F:aspartate carbamoyltransferase activity"/>
    <property type="evidence" value="ECO:0007669"/>
    <property type="project" value="UniProtKB-UniRule"/>
</dbReference>
<dbReference type="GO" id="GO:0006207">
    <property type="term" value="P:'de novo' pyrimidine nucleobase biosynthetic process"/>
    <property type="evidence" value="ECO:0007669"/>
    <property type="project" value="InterPro"/>
</dbReference>
<dbReference type="GO" id="GO:0044205">
    <property type="term" value="P:'de novo' UMP biosynthetic process"/>
    <property type="evidence" value="ECO:0007669"/>
    <property type="project" value="UniProtKB-UniRule"/>
</dbReference>
<dbReference type="GO" id="GO:0006520">
    <property type="term" value="P:amino acid metabolic process"/>
    <property type="evidence" value="ECO:0007669"/>
    <property type="project" value="InterPro"/>
</dbReference>
<dbReference type="FunFam" id="3.40.50.1370:FF:000007">
    <property type="entry name" value="Aspartate carbamoyltransferase"/>
    <property type="match status" value="1"/>
</dbReference>
<dbReference type="FunFam" id="3.40.50.1370:FF:000012">
    <property type="entry name" value="Aspartate carbamoyltransferase"/>
    <property type="match status" value="1"/>
</dbReference>
<dbReference type="Gene3D" id="3.40.50.1370">
    <property type="entry name" value="Aspartate/ornithine carbamoyltransferase"/>
    <property type="match status" value="2"/>
</dbReference>
<dbReference type="HAMAP" id="MF_00001">
    <property type="entry name" value="Asp_carb_tr"/>
    <property type="match status" value="1"/>
</dbReference>
<dbReference type="InterPro" id="IPR006132">
    <property type="entry name" value="Asp/Orn_carbamoyltranf_P-bd"/>
</dbReference>
<dbReference type="InterPro" id="IPR006130">
    <property type="entry name" value="Asp/Orn_carbamoylTrfase"/>
</dbReference>
<dbReference type="InterPro" id="IPR036901">
    <property type="entry name" value="Asp/Orn_carbamoylTrfase_sf"/>
</dbReference>
<dbReference type="InterPro" id="IPR002082">
    <property type="entry name" value="Asp_carbamoyltransf"/>
</dbReference>
<dbReference type="InterPro" id="IPR006131">
    <property type="entry name" value="Asp_carbamoyltransf_Asp/Orn-bd"/>
</dbReference>
<dbReference type="NCBIfam" id="TIGR00670">
    <property type="entry name" value="asp_carb_tr"/>
    <property type="match status" value="1"/>
</dbReference>
<dbReference type="NCBIfam" id="NF002032">
    <property type="entry name" value="PRK00856.1"/>
    <property type="match status" value="1"/>
</dbReference>
<dbReference type="PANTHER" id="PTHR45753:SF6">
    <property type="entry name" value="ASPARTATE CARBAMOYLTRANSFERASE"/>
    <property type="match status" value="1"/>
</dbReference>
<dbReference type="PANTHER" id="PTHR45753">
    <property type="entry name" value="ORNITHINE CARBAMOYLTRANSFERASE, MITOCHONDRIAL"/>
    <property type="match status" value="1"/>
</dbReference>
<dbReference type="Pfam" id="PF00185">
    <property type="entry name" value="OTCace"/>
    <property type="match status" value="1"/>
</dbReference>
<dbReference type="Pfam" id="PF02729">
    <property type="entry name" value="OTCace_N"/>
    <property type="match status" value="1"/>
</dbReference>
<dbReference type="PRINTS" id="PR00100">
    <property type="entry name" value="AOTCASE"/>
</dbReference>
<dbReference type="PRINTS" id="PR00101">
    <property type="entry name" value="ATCASE"/>
</dbReference>
<dbReference type="SUPFAM" id="SSF53671">
    <property type="entry name" value="Aspartate/ornithine carbamoyltransferase"/>
    <property type="match status" value="1"/>
</dbReference>
<dbReference type="PROSITE" id="PS00097">
    <property type="entry name" value="CARBAMOYLTRANSFERASE"/>
    <property type="match status" value="1"/>
</dbReference>
<keyword id="KW-0665">Pyrimidine biosynthesis</keyword>
<keyword id="KW-0808">Transferase</keyword>
<comment type="function">
    <text evidence="1">Catalyzes the condensation of carbamoyl phosphate and aspartate to form carbamoyl aspartate and inorganic phosphate, the committed step in the de novo pyrimidine nucleotide biosynthesis pathway.</text>
</comment>
<comment type="catalytic activity">
    <reaction evidence="1">
        <text>carbamoyl phosphate + L-aspartate = N-carbamoyl-L-aspartate + phosphate + H(+)</text>
        <dbReference type="Rhea" id="RHEA:20013"/>
        <dbReference type="ChEBI" id="CHEBI:15378"/>
        <dbReference type="ChEBI" id="CHEBI:29991"/>
        <dbReference type="ChEBI" id="CHEBI:32814"/>
        <dbReference type="ChEBI" id="CHEBI:43474"/>
        <dbReference type="ChEBI" id="CHEBI:58228"/>
        <dbReference type="EC" id="2.1.3.2"/>
    </reaction>
</comment>
<comment type="pathway">
    <text evidence="1">Pyrimidine metabolism; UMP biosynthesis via de novo pathway; (S)-dihydroorotate from bicarbonate: step 2/3.</text>
</comment>
<comment type="subunit">
    <text evidence="1">Heterododecamer (2C3:3R2) of six catalytic PyrB chains organized as two trimers (C3), and six regulatory PyrI chains organized as three dimers (R2).</text>
</comment>
<comment type="similarity">
    <text evidence="1">Belongs to the aspartate/ornithine carbamoyltransferase superfamily. ATCase family.</text>
</comment>
<sequence>MKHLLSTQDLSLHNAIRILDTAEEMSAVGDREVKKLPALRGRTVVNLFFEDSTRTRISFEAAAKRLSADVINFAAKGSSVSKGESLKDTAQTLSAMGADAVVIRHWASGAPHRLAATDWIDAGVINAGDGTHEHPTQALLDAFTMRRHWAKLSGTPSEGADLKGMRVAIAGDVLHSRVARSNVWLLRTLGAEVTLVAPPTLLPIGVEKWPCAVSYDLDETLARGVDAVMMLRVQGERMNASFFPSTREYSRRWGFDDNRLRALDSLGMKDTIIMHPGPMNRGLEISAAAADSPRSTVLAQVRNGVSVRMAALYLLLSGDTRETAAPPVLAAAGTAHSTKESI</sequence>
<evidence type="ECO:0000255" key="1">
    <source>
        <dbReference type="HAMAP-Rule" id="MF_00001"/>
    </source>
</evidence>
<reference key="1">
    <citation type="submission" date="2009-01" db="EMBL/GenBank/DDBJ databases">
        <title>Complete sequence of chromosome of Arthrobacter chlorophenolicus A6.</title>
        <authorList>
            <consortium name="US DOE Joint Genome Institute"/>
            <person name="Lucas S."/>
            <person name="Copeland A."/>
            <person name="Lapidus A."/>
            <person name="Glavina del Rio T."/>
            <person name="Tice H."/>
            <person name="Bruce D."/>
            <person name="Goodwin L."/>
            <person name="Pitluck S."/>
            <person name="Goltsman E."/>
            <person name="Clum A."/>
            <person name="Larimer F."/>
            <person name="Land M."/>
            <person name="Hauser L."/>
            <person name="Kyrpides N."/>
            <person name="Mikhailova N."/>
            <person name="Jansson J."/>
            <person name="Richardson P."/>
        </authorList>
    </citation>
    <scope>NUCLEOTIDE SEQUENCE [LARGE SCALE GENOMIC DNA]</scope>
    <source>
        <strain>ATCC 700700 / DSM 12829 / CIP 107037 / JCM 12360 / KCTC 9906 / NCIMB 13794 / A6</strain>
    </source>
</reference>
<feature type="chain" id="PRO_1000116121" description="Aspartate carbamoyltransferase catalytic subunit">
    <location>
        <begin position="1"/>
        <end position="342"/>
    </location>
</feature>
<feature type="binding site" evidence="1">
    <location>
        <position position="54"/>
    </location>
    <ligand>
        <name>carbamoyl phosphate</name>
        <dbReference type="ChEBI" id="CHEBI:58228"/>
    </ligand>
</feature>
<feature type="binding site" evidence="1">
    <location>
        <position position="55"/>
    </location>
    <ligand>
        <name>carbamoyl phosphate</name>
        <dbReference type="ChEBI" id="CHEBI:58228"/>
    </ligand>
</feature>
<feature type="binding site" evidence="1">
    <location>
        <position position="82"/>
    </location>
    <ligand>
        <name>L-aspartate</name>
        <dbReference type="ChEBI" id="CHEBI:29991"/>
    </ligand>
</feature>
<feature type="binding site" evidence="1">
    <location>
        <position position="104"/>
    </location>
    <ligand>
        <name>carbamoyl phosphate</name>
        <dbReference type="ChEBI" id="CHEBI:58228"/>
    </ligand>
</feature>
<feature type="binding site" evidence="1">
    <location>
        <position position="134"/>
    </location>
    <ligand>
        <name>carbamoyl phosphate</name>
        <dbReference type="ChEBI" id="CHEBI:58228"/>
    </ligand>
</feature>
<feature type="binding site" evidence="1">
    <location>
        <position position="137"/>
    </location>
    <ligand>
        <name>carbamoyl phosphate</name>
        <dbReference type="ChEBI" id="CHEBI:58228"/>
    </ligand>
</feature>
<feature type="binding site" evidence="1">
    <location>
        <position position="177"/>
    </location>
    <ligand>
        <name>L-aspartate</name>
        <dbReference type="ChEBI" id="CHEBI:29991"/>
    </ligand>
</feature>
<feature type="binding site" evidence="1">
    <location>
        <position position="232"/>
    </location>
    <ligand>
        <name>L-aspartate</name>
        <dbReference type="ChEBI" id="CHEBI:29991"/>
    </ligand>
</feature>
<feature type="binding site" evidence="1">
    <location>
        <position position="277"/>
    </location>
    <ligand>
        <name>carbamoyl phosphate</name>
        <dbReference type="ChEBI" id="CHEBI:58228"/>
    </ligand>
</feature>
<feature type="binding site" evidence="1">
    <location>
        <position position="278"/>
    </location>
    <ligand>
        <name>carbamoyl phosphate</name>
        <dbReference type="ChEBI" id="CHEBI:58228"/>
    </ligand>
</feature>
<proteinExistence type="inferred from homology"/>